<protein>
    <recommendedName>
        <fullName evidence="1">Small ribosomal subunit protein uS11</fullName>
    </recommendedName>
    <alternativeName>
        <fullName evidence="2">30S ribosomal protein S11</fullName>
    </alternativeName>
</protein>
<proteinExistence type="inferred from homology"/>
<keyword id="KW-0687">Ribonucleoprotein</keyword>
<keyword id="KW-0689">Ribosomal protein</keyword>
<keyword id="KW-0694">RNA-binding</keyword>
<keyword id="KW-0699">rRNA-binding</keyword>
<accession>Q0TCG4</accession>
<feature type="chain" id="PRO_0000294755" description="Small ribosomal subunit protein uS11">
    <location>
        <begin position="1"/>
        <end position="129"/>
    </location>
</feature>
<organism>
    <name type="scientific">Escherichia coli O6:K15:H31 (strain 536 / UPEC)</name>
    <dbReference type="NCBI Taxonomy" id="362663"/>
    <lineage>
        <taxon>Bacteria</taxon>
        <taxon>Pseudomonadati</taxon>
        <taxon>Pseudomonadota</taxon>
        <taxon>Gammaproteobacteria</taxon>
        <taxon>Enterobacterales</taxon>
        <taxon>Enterobacteriaceae</taxon>
        <taxon>Escherichia</taxon>
    </lineage>
</organism>
<reference key="1">
    <citation type="journal article" date="2006" name="Mol. Microbiol.">
        <title>Role of pathogenicity island-associated integrases in the genome plasticity of uropathogenic Escherichia coli strain 536.</title>
        <authorList>
            <person name="Hochhut B."/>
            <person name="Wilde C."/>
            <person name="Balling G."/>
            <person name="Middendorf B."/>
            <person name="Dobrindt U."/>
            <person name="Brzuszkiewicz E."/>
            <person name="Gottschalk G."/>
            <person name="Carniel E."/>
            <person name="Hacker J."/>
        </authorList>
    </citation>
    <scope>NUCLEOTIDE SEQUENCE [LARGE SCALE GENOMIC DNA]</scope>
    <source>
        <strain>536 / UPEC</strain>
    </source>
</reference>
<sequence length="129" mass="13845">MAKAPIRARKRVRKQVSDGVAHIHASFNNTIVTITDRQGNALGWATAGGSGFRGSRKSTPFAAQVAAERCADAVKEYGIKNLEVMVKGPGPGRESTIRALNAAGFRITNITDVTPIPHNGCRPPKKRRV</sequence>
<gene>
    <name evidence="1" type="primary">rpsK</name>
    <name type="ordered locus">ECP_3385</name>
</gene>
<evidence type="ECO:0000255" key="1">
    <source>
        <dbReference type="HAMAP-Rule" id="MF_01310"/>
    </source>
</evidence>
<evidence type="ECO:0000305" key="2"/>
<name>RS11_ECOL5</name>
<comment type="function">
    <text evidence="1">Located on the platform of the 30S subunit, it bridges several disparate RNA helices of the 16S rRNA. Forms part of the Shine-Dalgarno cleft in the 70S ribosome.</text>
</comment>
<comment type="subunit">
    <text evidence="1">Part of the 30S ribosomal subunit. Interacts with proteins S7 and S18. Binds to IF-3.</text>
</comment>
<comment type="similarity">
    <text evidence="1">Belongs to the universal ribosomal protein uS11 family.</text>
</comment>
<dbReference type="EMBL" id="CP000247">
    <property type="protein sequence ID" value="ABG71365.1"/>
    <property type="molecule type" value="Genomic_DNA"/>
</dbReference>
<dbReference type="RefSeq" id="WP_001029684.1">
    <property type="nucleotide sequence ID" value="NC_008253.1"/>
</dbReference>
<dbReference type="SMR" id="Q0TCG4"/>
<dbReference type="GeneID" id="93778690"/>
<dbReference type="KEGG" id="ecp:ECP_3385"/>
<dbReference type="HOGENOM" id="CLU_072439_5_0_6"/>
<dbReference type="Proteomes" id="UP000009182">
    <property type="component" value="Chromosome"/>
</dbReference>
<dbReference type="GO" id="GO:1990904">
    <property type="term" value="C:ribonucleoprotein complex"/>
    <property type="evidence" value="ECO:0007669"/>
    <property type="project" value="UniProtKB-KW"/>
</dbReference>
<dbReference type="GO" id="GO:0005840">
    <property type="term" value="C:ribosome"/>
    <property type="evidence" value="ECO:0007669"/>
    <property type="project" value="UniProtKB-KW"/>
</dbReference>
<dbReference type="GO" id="GO:0019843">
    <property type="term" value="F:rRNA binding"/>
    <property type="evidence" value="ECO:0007669"/>
    <property type="project" value="UniProtKB-UniRule"/>
</dbReference>
<dbReference type="GO" id="GO:0003735">
    <property type="term" value="F:structural constituent of ribosome"/>
    <property type="evidence" value="ECO:0007669"/>
    <property type="project" value="InterPro"/>
</dbReference>
<dbReference type="GO" id="GO:0006412">
    <property type="term" value="P:translation"/>
    <property type="evidence" value="ECO:0007669"/>
    <property type="project" value="UniProtKB-UniRule"/>
</dbReference>
<dbReference type="FunFam" id="3.30.420.80:FF:000001">
    <property type="entry name" value="30S ribosomal protein S11"/>
    <property type="match status" value="1"/>
</dbReference>
<dbReference type="Gene3D" id="3.30.420.80">
    <property type="entry name" value="Ribosomal protein S11"/>
    <property type="match status" value="1"/>
</dbReference>
<dbReference type="HAMAP" id="MF_01310">
    <property type="entry name" value="Ribosomal_uS11"/>
    <property type="match status" value="1"/>
</dbReference>
<dbReference type="InterPro" id="IPR001971">
    <property type="entry name" value="Ribosomal_uS11"/>
</dbReference>
<dbReference type="InterPro" id="IPR019981">
    <property type="entry name" value="Ribosomal_uS11_bac-type"/>
</dbReference>
<dbReference type="InterPro" id="IPR018102">
    <property type="entry name" value="Ribosomal_uS11_CS"/>
</dbReference>
<dbReference type="InterPro" id="IPR036967">
    <property type="entry name" value="Ribosomal_uS11_sf"/>
</dbReference>
<dbReference type="NCBIfam" id="NF003698">
    <property type="entry name" value="PRK05309.1"/>
    <property type="match status" value="1"/>
</dbReference>
<dbReference type="NCBIfam" id="TIGR03632">
    <property type="entry name" value="uS11_bact"/>
    <property type="match status" value="1"/>
</dbReference>
<dbReference type="PANTHER" id="PTHR11759">
    <property type="entry name" value="40S RIBOSOMAL PROTEIN S14/30S RIBOSOMAL PROTEIN S11"/>
    <property type="match status" value="1"/>
</dbReference>
<dbReference type="Pfam" id="PF00411">
    <property type="entry name" value="Ribosomal_S11"/>
    <property type="match status" value="1"/>
</dbReference>
<dbReference type="PIRSF" id="PIRSF002131">
    <property type="entry name" value="Ribosomal_S11"/>
    <property type="match status" value="1"/>
</dbReference>
<dbReference type="SUPFAM" id="SSF53137">
    <property type="entry name" value="Translational machinery components"/>
    <property type="match status" value="1"/>
</dbReference>
<dbReference type="PROSITE" id="PS00054">
    <property type="entry name" value="RIBOSOMAL_S11"/>
    <property type="match status" value="1"/>
</dbReference>